<evidence type="ECO:0000250" key="1"/>
<evidence type="ECO:0000255" key="2"/>
<evidence type="ECO:0000256" key="3">
    <source>
        <dbReference type="SAM" id="MobiDB-lite"/>
    </source>
</evidence>
<evidence type="ECO:0000269" key="4">
    <source>
    </source>
</evidence>
<evidence type="ECO:0000303" key="5">
    <source>
    </source>
</evidence>
<evidence type="ECO:0000305" key="6"/>
<feature type="signal peptide" evidence="2">
    <location>
        <begin position="1"/>
        <end position="26"/>
    </location>
</feature>
<feature type="chain" id="PRO_0000023396" description="Vascular endothelial growth factor A">
    <location>
        <begin position="27"/>
        <end position="216"/>
    </location>
</feature>
<feature type="region of interest" description="Disordered" evidence="3">
    <location>
        <begin position="140"/>
        <end position="161"/>
    </location>
</feature>
<feature type="compositionally biased region" description="Basic residues" evidence="3">
    <location>
        <begin position="145"/>
        <end position="161"/>
    </location>
</feature>
<feature type="glycosylation site" description="N-linked (GlcNAc...) asparagine" evidence="1">
    <location>
        <position position="101"/>
    </location>
</feature>
<feature type="disulfide bond" evidence="1">
    <location>
        <begin position="52"/>
        <end position="94"/>
    </location>
</feature>
<feature type="disulfide bond" description="Interchain" evidence="1">
    <location>
        <position position="77"/>
    </location>
</feature>
<feature type="disulfide bond" evidence="1">
    <location>
        <begin position="83"/>
        <end position="128"/>
    </location>
</feature>
<feature type="disulfide bond" description="Interchain" evidence="1">
    <location>
        <position position="86"/>
    </location>
</feature>
<feature type="disulfide bond" evidence="1">
    <location>
        <begin position="87"/>
        <end position="130"/>
    </location>
</feature>
<feature type="splice variant" id="VSP_011751" description="In isoform VEGF-166." evidence="5">
    <original>KKSKREKGKGQKRKRKRGRYKPQNF</original>
    <variation>N</variation>
    <location>
        <begin position="142"/>
        <end position="166"/>
    </location>
</feature>
<feature type="splice variant" id="VSP_011752" description="In isoform VEGF-122." evidence="5">
    <location>
        <begin position="143"/>
        <end position="210"/>
    </location>
</feature>
<keyword id="KW-0025">Alternative splicing</keyword>
<keyword id="KW-0037">Angiogenesis</keyword>
<keyword id="KW-0217">Developmental protein</keyword>
<keyword id="KW-0221">Differentiation</keyword>
<keyword id="KW-1015">Disulfide bond</keyword>
<keyword id="KW-0325">Glycoprotein</keyword>
<keyword id="KW-0339">Growth factor</keyword>
<keyword id="KW-0358">Heparin-binding</keyword>
<keyword id="KW-0497">Mitogen</keyword>
<keyword id="KW-0964">Secreted</keyword>
<keyword id="KW-0732">Signal</keyword>
<comment type="function">
    <text evidence="1">Growth factor active in angiogenesis, vasculogenesis and endothelial cell growth. Induces endothelial cell proliferation, promotes cell migration, inhibits apoptosis and induces permeabilization of blood vessels.</text>
</comment>
<comment type="subunit">
    <text evidence="1 4">Homodimer; disulfide-linked. Also found as heterodimer with PGF (By similarity). Interacts to the FLT1/VEGFR1 and KDR/VEGFR2 receptors, heparan sulfate and heparin.</text>
</comment>
<comment type="subcellular location">
    <subcellularLocation>
        <location evidence="1">Secreted</location>
    </subcellularLocation>
</comment>
<comment type="alternative products">
    <event type="alternative splicing"/>
    <isoform>
        <id>P67860-1</id>
        <name>VEGF-190</name>
        <sequence type="displayed"/>
    </isoform>
    <isoform>
        <id>P67860-2</id>
        <name>VEGF-166</name>
        <sequence type="described" ref="VSP_011751"/>
    </isoform>
    <isoform>
        <id>P67860-3</id>
        <name>VEGF-122</name>
        <sequence type="described" ref="VSP_011752"/>
    </isoform>
</comment>
<comment type="tissue specificity">
    <text evidence="4">Expressed in venom gland, heart, brain, liver, skeletal muscle and kidney.</text>
</comment>
<comment type="similarity">
    <text evidence="6">Belongs to the PDGF/VEGF growth factor family.</text>
</comment>
<reference key="1">
    <citation type="journal article" date="2004" name="J. Biol. Chem.">
        <title>A novel snake venom vascular endothelial growth factor (VEGF) predominantly induces vascular permeability through preferential signaling via VEGF receptor-1.</title>
        <authorList>
            <person name="Takahashi H."/>
            <person name="Hattori S."/>
            <person name="Iwamatsu A."/>
            <person name="Takizawa H."/>
            <person name="Shibuya M."/>
        </authorList>
    </citation>
    <scope>NUCLEOTIDE SEQUENCE [MRNA] (ISOFORMS VEGF-122; VEGF-166 AND VEGF-190)</scope>
    <scope>INTERACTION WITH FLT1; KDR; HEPARAN SULFATE AND HEPARIN</scope>
    <scope>TISSUE SPECIFICITY</scope>
    <source>
        <tissue>Kidney</tissue>
    </source>
</reference>
<reference key="2">
    <citation type="journal article" date="2009" name="J. Biol. Chem.">
        <title>Snake venom vascular endothelial growth factors (VEGF-Fs) exclusively vary their structures and functions among species.</title>
        <authorList>
            <person name="Yamazaki Y."/>
            <person name="Matsunaga Y."/>
            <person name="Tokunaga Y."/>
            <person name="Obayashi S."/>
            <person name="Saito M."/>
            <person name="Morita T."/>
        </authorList>
    </citation>
    <scope>NUCLEOTIDE SEQUENCE [MRNA] (ISOFORM VEGF-190)</scope>
    <source>
        <tissue>Venom gland</tissue>
    </source>
</reference>
<dbReference type="EMBL" id="AB154418">
    <property type="protein sequence ID" value="BAD38845.1"/>
    <property type="molecule type" value="mRNA"/>
</dbReference>
<dbReference type="EMBL" id="AB154419">
    <property type="protein sequence ID" value="BAD38846.1"/>
    <property type="molecule type" value="mRNA"/>
</dbReference>
<dbReference type="EMBL" id="AB154420">
    <property type="protein sequence ID" value="BAD38847.1"/>
    <property type="molecule type" value="mRNA"/>
</dbReference>
<dbReference type="EMBL" id="FJ554641">
    <property type="protein sequence ID" value="ACN22044.1"/>
    <property type="molecule type" value="Genomic_DNA"/>
</dbReference>
<dbReference type="SMR" id="P67860"/>
<dbReference type="GO" id="GO:0005615">
    <property type="term" value="C:extracellular space"/>
    <property type="evidence" value="ECO:0007669"/>
    <property type="project" value="TreeGrafter"/>
</dbReference>
<dbReference type="GO" id="GO:0016020">
    <property type="term" value="C:membrane"/>
    <property type="evidence" value="ECO:0007669"/>
    <property type="project" value="InterPro"/>
</dbReference>
<dbReference type="GO" id="GO:0042056">
    <property type="term" value="F:chemoattractant activity"/>
    <property type="evidence" value="ECO:0007669"/>
    <property type="project" value="TreeGrafter"/>
</dbReference>
<dbReference type="GO" id="GO:0008083">
    <property type="term" value="F:growth factor activity"/>
    <property type="evidence" value="ECO:0007669"/>
    <property type="project" value="UniProtKB-KW"/>
</dbReference>
<dbReference type="GO" id="GO:0008201">
    <property type="term" value="F:heparin binding"/>
    <property type="evidence" value="ECO:0007669"/>
    <property type="project" value="UniProtKB-KW"/>
</dbReference>
<dbReference type="GO" id="GO:0005172">
    <property type="term" value="F:vascular endothelial growth factor receptor binding"/>
    <property type="evidence" value="ECO:0007669"/>
    <property type="project" value="TreeGrafter"/>
</dbReference>
<dbReference type="GO" id="GO:0030154">
    <property type="term" value="P:cell differentiation"/>
    <property type="evidence" value="ECO:0007669"/>
    <property type="project" value="UniProtKB-KW"/>
</dbReference>
<dbReference type="GO" id="GO:0050930">
    <property type="term" value="P:induction of positive chemotaxis"/>
    <property type="evidence" value="ECO:0007669"/>
    <property type="project" value="TreeGrafter"/>
</dbReference>
<dbReference type="GO" id="GO:0045766">
    <property type="term" value="P:positive regulation of angiogenesis"/>
    <property type="evidence" value="ECO:0007669"/>
    <property type="project" value="TreeGrafter"/>
</dbReference>
<dbReference type="GO" id="GO:0051781">
    <property type="term" value="P:positive regulation of cell division"/>
    <property type="evidence" value="ECO:0007669"/>
    <property type="project" value="UniProtKB-KW"/>
</dbReference>
<dbReference type="GO" id="GO:0001938">
    <property type="term" value="P:positive regulation of endothelial cell proliferation"/>
    <property type="evidence" value="ECO:0000250"/>
    <property type="project" value="UniProtKB"/>
</dbReference>
<dbReference type="GO" id="GO:0051894">
    <property type="term" value="P:positive regulation of focal adhesion assembly"/>
    <property type="evidence" value="ECO:0000250"/>
    <property type="project" value="UniProtKB"/>
</dbReference>
<dbReference type="GO" id="GO:0060754">
    <property type="term" value="P:positive regulation of mast cell chemotaxis"/>
    <property type="evidence" value="ECO:0007669"/>
    <property type="project" value="TreeGrafter"/>
</dbReference>
<dbReference type="GO" id="GO:0050731">
    <property type="term" value="P:positive regulation of peptidyl-tyrosine phosphorylation"/>
    <property type="evidence" value="ECO:0000250"/>
    <property type="project" value="UniProtKB"/>
</dbReference>
<dbReference type="GO" id="GO:0031334">
    <property type="term" value="P:positive regulation of protein-containing complex assembly"/>
    <property type="evidence" value="ECO:0000250"/>
    <property type="project" value="UniProtKB"/>
</dbReference>
<dbReference type="GO" id="GO:0001666">
    <property type="term" value="P:response to hypoxia"/>
    <property type="evidence" value="ECO:0007669"/>
    <property type="project" value="TreeGrafter"/>
</dbReference>
<dbReference type="GO" id="GO:0002040">
    <property type="term" value="P:sprouting angiogenesis"/>
    <property type="evidence" value="ECO:0007669"/>
    <property type="project" value="TreeGrafter"/>
</dbReference>
<dbReference type="GO" id="GO:0048010">
    <property type="term" value="P:vascular endothelial growth factor receptor signaling pathway"/>
    <property type="evidence" value="ECO:0007669"/>
    <property type="project" value="TreeGrafter"/>
</dbReference>
<dbReference type="GO" id="GO:0038084">
    <property type="term" value="P:vascular endothelial growth factor signaling pathway"/>
    <property type="evidence" value="ECO:0007669"/>
    <property type="project" value="TreeGrafter"/>
</dbReference>
<dbReference type="CDD" id="cd00135">
    <property type="entry name" value="PDGF"/>
    <property type="match status" value="1"/>
</dbReference>
<dbReference type="FunFam" id="2.10.160.10:FF:000001">
    <property type="entry name" value="Vascular endothelial growth factor A"/>
    <property type="match status" value="1"/>
</dbReference>
<dbReference type="FunFam" id="2.10.90.10:FF:000009">
    <property type="entry name" value="Vascular endothelial growth factor A"/>
    <property type="match status" value="1"/>
</dbReference>
<dbReference type="Gene3D" id="2.10.90.10">
    <property type="entry name" value="Cystine-knot cytokines"/>
    <property type="match status" value="1"/>
</dbReference>
<dbReference type="Gene3D" id="2.10.160.10">
    <property type="entry name" value="Vascular endothelial growth factor, heparin-binding domain"/>
    <property type="match status" value="1"/>
</dbReference>
<dbReference type="InterPro" id="IPR029034">
    <property type="entry name" value="Cystine-knot_cytokine"/>
</dbReference>
<dbReference type="InterPro" id="IPR023581">
    <property type="entry name" value="PD_growth_factor_CS"/>
</dbReference>
<dbReference type="InterPro" id="IPR000072">
    <property type="entry name" value="PDGF/VEGF_dom"/>
</dbReference>
<dbReference type="InterPro" id="IPR050507">
    <property type="entry name" value="PDGF/VEGF_growth_factor"/>
</dbReference>
<dbReference type="InterPro" id="IPR027928">
    <property type="entry name" value="VEGF_C"/>
</dbReference>
<dbReference type="InterPro" id="IPR036841">
    <property type="entry name" value="VEGF_C_sf"/>
</dbReference>
<dbReference type="PANTHER" id="PTHR12025">
    <property type="entry name" value="VASCULAR ENDOTHELIAL GROWTH FACTOR"/>
    <property type="match status" value="1"/>
</dbReference>
<dbReference type="PANTHER" id="PTHR12025:SF5">
    <property type="entry name" value="VASCULAR ENDOTHELIAL GROWTH FACTOR A, LONG FORM"/>
    <property type="match status" value="1"/>
</dbReference>
<dbReference type="Pfam" id="PF00341">
    <property type="entry name" value="PDGF"/>
    <property type="match status" value="1"/>
</dbReference>
<dbReference type="Pfam" id="PF14554">
    <property type="entry name" value="VEGF_C"/>
    <property type="match status" value="1"/>
</dbReference>
<dbReference type="SMART" id="SM00141">
    <property type="entry name" value="PDGF"/>
    <property type="match status" value="1"/>
</dbReference>
<dbReference type="SUPFAM" id="SSF57501">
    <property type="entry name" value="Cystine-knot cytokines"/>
    <property type="match status" value="1"/>
</dbReference>
<dbReference type="SUPFAM" id="SSF57593">
    <property type="entry name" value="Heparin-binding domain from vascular endothelial growth factor"/>
    <property type="match status" value="1"/>
</dbReference>
<dbReference type="PROSITE" id="PS00249">
    <property type="entry name" value="PDGF_1"/>
    <property type="match status" value="1"/>
</dbReference>
<dbReference type="PROSITE" id="PS50278">
    <property type="entry name" value="PDGF_2"/>
    <property type="match status" value="1"/>
</dbReference>
<name>VEGFA_PROFL</name>
<protein>
    <recommendedName>
        <fullName>Vascular endothelial growth factor A</fullName>
        <shortName>VEGF-A</shortName>
    </recommendedName>
    <alternativeName>
        <fullName>Vascular permeability factor</fullName>
        <shortName>VPF</shortName>
    </alternativeName>
</protein>
<sequence>MNFLLTWIHWGLAALLYFHNAKVLQAAPAQGDGDRQQSEVIPFMTVYERSVCRPIETMVDIFQDYPDEVEYILKPPCVALMRCGGCCNDEALECVPTELYNVTMEIMKLKPYQSQHIHPMSFQQHSKCECRPKKETRIIQEKKSKREKGKGQKRKRKRGRYKPQNFHCEPCSERRKHLYKQDPLTCKCSCKFTDSRCKSKQLELNERTCRCEKPRR</sequence>
<organism>
    <name type="scientific">Protobothrops flavoviridis</name>
    <name type="common">Habu</name>
    <name type="synonym">Trimeresurus flavoviridis</name>
    <dbReference type="NCBI Taxonomy" id="88087"/>
    <lineage>
        <taxon>Eukaryota</taxon>
        <taxon>Metazoa</taxon>
        <taxon>Chordata</taxon>
        <taxon>Craniata</taxon>
        <taxon>Vertebrata</taxon>
        <taxon>Euteleostomi</taxon>
        <taxon>Lepidosauria</taxon>
        <taxon>Squamata</taxon>
        <taxon>Bifurcata</taxon>
        <taxon>Unidentata</taxon>
        <taxon>Episquamata</taxon>
        <taxon>Toxicofera</taxon>
        <taxon>Serpentes</taxon>
        <taxon>Colubroidea</taxon>
        <taxon>Viperidae</taxon>
        <taxon>Crotalinae</taxon>
        <taxon>Protobothrops</taxon>
    </lineage>
</organism>
<accession>P67860</accession>
<accession>C0K3N7</accession>
<accession>Q68BI2</accession>
<accession>Q68BI3</accession>
<accession>Q68BI4</accession>
<proteinExistence type="evidence at protein level"/>